<sequence length="629" mass="69551">MFYPDPFDVIIIGGGHAGTEAAMAAARMGQQTLLLTHNIDTLGQMSCNPAIGGIGKGHLVKEVDALGGLMAKAIDQAGIQFRILNASKGPAVRATRAQADRVLYKQAVRTALENQPNLMIFQQAVDDLIVENDRVVGAVTQMGLKFRAKAVVLTVGTFLDGKIHIGLDNYSGGRAGDPPSVPLARRLRELPLRVSRLKTGTPPRIDARTIDFSVLDQQHGDNPMPVFSFMGSADQHPRQVPCYVTHTNEKTHDVIRNNLDRSPMYAGVIEGIGPRYCPSIEDKVMRFADRNAHQIFLEPEGLTSNEIYPNGISTSLPFDVQMQIVRSMKGMENAKIVRPGYAIEYDFFDPRDLKPTLESKYIHGLFFAGQINGTTGYEEAAAQGLLAGLNAGRYSAEKEGWAPGRSQAYLGVLVDDLCTLGTKEPYRMFTSRAEYRLMLREDNADLRLTEVGREMGLVDDARWARFNEKLENIERERQRLRSTWVTPSTASVEEINTMLTAPLSREASGEDLLRRPEMTYAQLTSLSAFAPALDDAQAAEQVEIQVKYEGYIARQQDEIEKQQRNENTLLPATLDYRQVNGLSNEVIAKLNDHKPASIGQASRISGITPAAISILLVWLKKQGLLRRSA</sequence>
<name>MNMG_CROS8</name>
<dbReference type="EMBL" id="CP000783">
    <property type="protein sequence ID" value="ABU79201.1"/>
    <property type="molecule type" value="Genomic_DNA"/>
</dbReference>
<dbReference type="RefSeq" id="WP_012126197.1">
    <property type="nucleotide sequence ID" value="NC_009778.1"/>
</dbReference>
<dbReference type="SMR" id="A7MMW3"/>
<dbReference type="KEGG" id="esa:ESA_04015"/>
<dbReference type="PATRIC" id="fig|290339.8.peg.3563"/>
<dbReference type="HOGENOM" id="CLU_007831_2_2_6"/>
<dbReference type="Proteomes" id="UP000000260">
    <property type="component" value="Chromosome"/>
</dbReference>
<dbReference type="GO" id="GO:0005829">
    <property type="term" value="C:cytosol"/>
    <property type="evidence" value="ECO:0007669"/>
    <property type="project" value="TreeGrafter"/>
</dbReference>
<dbReference type="GO" id="GO:0050660">
    <property type="term" value="F:flavin adenine dinucleotide binding"/>
    <property type="evidence" value="ECO:0007669"/>
    <property type="project" value="UniProtKB-UniRule"/>
</dbReference>
<dbReference type="GO" id="GO:0030488">
    <property type="term" value="P:tRNA methylation"/>
    <property type="evidence" value="ECO:0007669"/>
    <property type="project" value="TreeGrafter"/>
</dbReference>
<dbReference type="GO" id="GO:0002098">
    <property type="term" value="P:tRNA wobble uridine modification"/>
    <property type="evidence" value="ECO:0007669"/>
    <property type="project" value="InterPro"/>
</dbReference>
<dbReference type="FunFam" id="1.10.10.1800:FF:000001">
    <property type="entry name" value="tRNA uridine 5-carboxymethylaminomethyl modification enzyme MnmG"/>
    <property type="match status" value="1"/>
</dbReference>
<dbReference type="FunFam" id="1.10.150.570:FF:000001">
    <property type="entry name" value="tRNA uridine 5-carboxymethylaminomethyl modification enzyme MnmG"/>
    <property type="match status" value="1"/>
</dbReference>
<dbReference type="FunFam" id="3.50.50.60:FF:000002">
    <property type="entry name" value="tRNA uridine 5-carboxymethylaminomethyl modification enzyme MnmG"/>
    <property type="match status" value="1"/>
</dbReference>
<dbReference type="FunFam" id="3.50.50.60:FF:000010">
    <property type="entry name" value="tRNA uridine 5-carboxymethylaminomethyl modification enzyme MnmG"/>
    <property type="match status" value="1"/>
</dbReference>
<dbReference type="Gene3D" id="3.50.50.60">
    <property type="entry name" value="FAD/NAD(P)-binding domain"/>
    <property type="match status" value="2"/>
</dbReference>
<dbReference type="Gene3D" id="1.10.150.570">
    <property type="entry name" value="GidA associated domain, C-terminal subdomain"/>
    <property type="match status" value="1"/>
</dbReference>
<dbReference type="Gene3D" id="1.10.10.1800">
    <property type="entry name" value="tRNA uridine 5-carboxymethylaminomethyl modification enzyme MnmG/GidA"/>
    <property type="match status" value="1"/>
</dbReference>
<dbReference type="HAMAP" id="MF_00129">
    <property type="entry name" value="MnmG_GidA"/>
    <property type="match status" value="1"/>
</dbReference>
<dbReference type="InterPro" id="IPR036188">
    <property type="entry name" value="FAD/NAD-bd_sf"/>
</dbReference>
<dbReference type="InterPro" id="IPR049312">
    <property type="entry name" value="GIDA_C_N"/>
</dbReference>
<dbReference type="InterPro" id="IPR004416">
    <property type="entry name" value="MnmG"/>
</dbReference>
<dbReference type="InterPro" id="IPR002218">
    <property type="entry name" value="MnmG-rel"/>
</dbReference>
<dbReference type="InterPro" id="IPR020595">
    <property type="entry name" value="MnmG-rel_CS"/>
</dbReference>
<dbReference type="InterPro" id="IPR026904">
    <property type="entry name" value="MnmG_C"/>
</dbReference>
<dbReference type="InterPro" id="IPR047001">
    <property type="entry name" value="MnmG_C_subdom"/>
</dbReference>
<dbReference type="InterPro" id="IPR044920">
    <property type="entry name" value="MnmG_C_subdom_sf"/>
</dbReference>
<dbReference type="InterPro" id="IPR040131">
    <property type="entry name" value="MnmG_N"/>
</dbReference>
<dbReference type="NCBIfam" id="TIGR00136">
    <property type="entry name" value="mnmG_gidA"/>
    <property type="match status" value="1"/>
</dbReference>
<dbReference type="PANTHER" id="PTHR11806">
    <property type="entry name" value="GLUCOSE INHIBITED DIVISION PROTEIN A"/>
    <property type="match status" value="1"/>
</dbReference>
<dbReference type="PANTHER" id="PTHR11806:SF0">
    <property type="entry name" value="PROTEIN MTO1 HOMOLOG, MITOCHONDRIAL"/>
    <property type="match status" value="1"/>
</dbReference>
<dbReference type="Pfam" id="PF01134">
    <property type="entry name" value="GIDA"/>
    <property type="match status" value="1"/>
</dbReference>
<dbReference type="Pfam" id="PF21680">
    <property type="entry name" value="GIDA_C_1st"/>
    <property type="match status" value="1"/>
</dbReference>
<dbReference type="Pfam" id="PF13932">
    <property type="entry name" value="SAM_GIDA_C"/>
    <property type="match status" value="1"/>
</dbReference>
<dbReference type="SMART" id="SM01228">
    <property type="entry name" value="GIDA_assoc_3"/>
    <property type="match status" value="1"/>
</dbReference>
<dbReference type="SUPFAM" id="SSF51905">
    <property type="entry name" value="FAD/NAD(P)-binding domain"/>
    <property type="match status" value="1"/>
</dbReference>
<dbReference type="PROSITE" id="PS01280">
    <property type="entry name" value="GIDA_1"/>
    <property type="match status" value="1"/>
</dbReference>
<dbReference type="PROSITE" id="PS01281">
    <property type="entry name" value="GIDA_2"/>
    <property type="match status" value="1"/>
</dbReference>
<evidence type="ECO:0000255" key="1">
    <source>
        <dbReference type="HAMAP-Rule" id="MF_00129"/>
    </source>
</evidence>
<keyword id="KW-0963">Cytoplasm</keyword>
<keyword id="KW-0274">FAD</keyword>
<keyword id="KW-0285">Flavoprotein</keyword>
<keyword id="KW-0520">NAD</keyword>
<keyword id="KW-1185">Reference proteome</keyword>
<keyword id="KW-0819">tRNA processing</keyword>
<accession>A7MMW3</accession>
<proteinExistence type="inferred from homology"/>
<comment type="function">
    <text evidence="1">NAD-binding protein involved in the addition of a carboxymethylaminomethyl (cmnm) group at the wobble position (U34) of certain tRNAs, forming tRNA-cmnm(5)s(2)U34.</text>
</comment>
<comment type="cofactor">
    <cofactor evidence="1">
        <name>FAD</name>
        <dbReference type="ChEBI" id="CHEBI:57692"/>
    </cofactor>
</comment>
<comment type="subunit">
    <text evidence="1">Homodimer. Heterotetramer of two MnmE and two MnmG subunits.</text>
</comment>
<comment type="subcellular location">
    <subcellularLocation>
        <location evidence="1">Cytoplasm</location>
    </subcellularLocation>
</comment>
<comment type="similarity">
    <text evidence="1">Belongs to the MnmG family.</text>
</comment>
<protein>
    <recommendedName>
        <fullName evidence="1">tRNA uridine 5-carboxymethylaminomethyl modification enzyme MnmG</fullName>
    </recommendedName>
    <alternativeName>
        <fullName evidence="1">Glucose-inhibited division protein A</fullName>
    </alternativeName>
</protein>
<feature type="chain" id="PRO_0000345265" description="tRNA uridine 5-carboxymethylaminomethyl modification enzyme MnmG">
    <location>
        <begin position="1"/>
        <end position="629"/>
    </location>
</feature>
<feature type="binding site" evidence="1">
    <location>
        <begin position="13"/>
        <end position="18"/>
    </location>
    <ligand>
        <name>FAD</name>
        <dbReference type="ChEBI" id="CHEBI:57692"/>
    </ligand>
</feature>
<feature type="binding site" evidence="1">
    <location>
        <position position="125"/>
    </location>
    <ligand>
        <name>FAD</name>
        <dbReference type="ChEBI" id="CHEBI:57692"/>
    </ligand>
</feature>
<feature type="binding site" evidence="1">
    <location>
        <position position="180"/>
    </location>
    <ligand>
        <name>FAD</name>
        <dbReference type="ChEBI" id="CHEBI:57692"/>
    </ligand>
</feature>
<feature type="binding site" evidence="1">
    <location>
        <begin position="273"/>
        <end position="287"/>
    </location>
    <ligand>
        <name>NAD(+)</name>
        <dbReference type="ChEBI" id="CHEBI:57540"/>
    </ligand>
</feature>
<feature type="binding site" evidence="1">
    <location>
        <position position="370"/>
    </location>
    <ligand>
        <name>FAD</name>
        <dbReference type="ChEBI" id="CHEBI:57692"/>
    </ligand>
</feature>
<gene>
    <name evidence="1" type="primary">mnmG</name>
    <name evidence="1" type="synonym">gidA</name>
    <name type="ordered locus">ESA_04015</name>
</gene>
<organism>
    <name type="scientific">Cronobacter sakazakii (strain ATCC BAA-894)</name>
    <name type="common">Enterobacter sakazakii</name>
    <dbReference type="NCBI Taxonomy" id="290339"/>
    <lineage>
        <taxon>Bacteria</taxon>
        <taxon>Pseudomonadati</taxon>
        <taxon>Pseudomonadota</taxon>
        <taxon>Gammaproteobacteria</taxon>
        <taxon>Enterobacterales</taxon>
        <taxon>Enterobacteriaceae</taxon>
        <taxon>Cronobacter</taxon>
    </lineage>
</organism>
<reference key="1">
    <citation type="journal article" date="2010" name="PLoS ONE">
        <title>Genome sequence of Cronobacter sakazakii BAA-894 and comparative genomic hybridization analysis with other Cronobacter species.</title>
        <authorList>
            <person name="Kucerova E."/>
            <person name="Clifton S.W."/>
            <person name="Xia X.Q."/>
            <person name="Long F."/>
            <person name="Porwollik S."/>
            <person name="Fulton L."/>
            <person name="Fronick C."/>
            <person name="Minx P."/>
            <person name="Kyung K."/>
            <person name="Warren W."/>
            <person name="Fulton R."/>
            <person name="Feng D."/>
            <person name="Wollam A."/>
            <person name="Shah N."/>
            <person name="Bhonagiri V."/>
            <person name="Nash W.E."/>
            <person name="Hallsworth-Pepin K."/>
            <person name="Wilson R.K."/>
            <person name="McClelland M."/>
            <person name="Forsythe S.J."/>
        </authorList>
    </citation>
    <scope>NUCLEOTIDE SEQUENCE [LARGE SCALE GENOMIC DNA]</scope>
    <source>
        <strain>ATCC BAA-894</strain>
    </source>
</reference>